<accession>Q85232</accession>
<dbReference type="EMBL" id="X87246">
    <property type="protein sequence ID" value="CAA60694.1"/>
    <property type="molecule type" value="Genomic_DNA"/>
</dbReference>
<dbReference type="SMR" id="Q85232"/>
<dbReference type="GO" id="GO:0030430">
    <property type="term" value="C:host cell cytoplasm"/>
    <property type="evidence" value="ECO:0007669"/>
    <property type="project" value="UniProtKB-SubCell"/>
</dbReference>
<dbReference type="GO" id="GO:0042025">
    <property type="term" value="C:host cell nucleus"/>
    <property type="evidence" value="ECO:0007669"/>
    <property type="project" value="UniProtKB-SubCell"/>
</dbReference>
<dbReference type="GO" id="GO:0003723">
    <property type="term" value="F:RNA binding"/>
    <property type="evidence" value="ECO:0007669"/>
    <property type="project" value="UniProtKB-KW"/>
</dbReference>
<dbReference type="GO" id="GO:0008270">
    <property type="term" value="F:zinc ion binding"/>
    <property type="evidence" value="ECO:0007669"/>
    <property type="project" value="UniProtKB-KW"/>
</dbReference>
<dbReference type="GO" id="GO:0006355">
    <property type="term" value="P:regulation of DNA-templated transcription"/>
    <property type="evidence" value="ECO:0007669"/>
    <property type="project" value="InterPro"/>
</dbReference>
<dbReference type="InterPro" id="IPR008648">
    <property type="entry name" value="ICP27-like"/>
</dbReference>
<dbReference type="Pfam" id="PF05459">
    <property type="entry name" value="Herpes_UL69"/>
    <property type="match status" value="1"/>
</dbReference>
<gene>
    <name type="ORF">UL54</name>
</gene>
<proteinExistence type="inferred from homology"/>
<organism>
    <name type="scientific">Suid herpesvirus 1 (strain Kaplan)</name>
    <name type="common">SuHV-1</name>
    <name type="synonym">Pseudorabies virus (strain Kaplan)</name>
    <dbReference type="NCBI Taxonomy" id="33703"/>
    <lineage>
        <taxon>Viruses</taxon>
        <taxon>Duplodnaviria</taxon>
        <taxon>Heunggongvirae</taxon>
        <taxon>Peploviricota</taxon>
        <taxon>Herviviricetes</taxon>
        <taxon>Herpesvirales</taxon>
        <taxon>Orthoherpesviridae</taxon>
        <taxon>Alphaherpesvirinae</taxon>
        <taxon>Varicellovirus</taxon>
        <taxon>Varicellovirus suidalpha1</taxon>
        <taxon>Suid herpesvirus 1</taxon>
    </lineage>
</organism>
<reference key="1">
    <citation type="journal article" date="1995" name="J. Virol.">
        <title>Pseudorabies virus and equine herpesvirus 1 share a nonessential gene which is absent in other herpesviruses and located adjacent to a highly conserved gene cluster.</title>
        <authorList>
            <person name="Baumeister J."/>
            <person name="Klupp B.G."/>
            <person name="Mettenleiter T.C."/>
        </authorList>
    </citation>
    <scope>NUCLEOTIDE SEQUENCE [GENOMIC DNA]</scope>
</reference>
<feature type="chain" id="PRO_0000115834" description="mRNA export factor ICP27 homolog">
    <location>
        <begin position="1"/>
        <end position="361"/>
    </location>
</feature>
<feature type="zinc finger region" description="CHC2-type" evidence="2">
    <location>
        <begin position="253"/>
        <end position="337"/>
    </location>
</feature>
<feature type="region of interest" description="Disordered" evidence="3">
    <location>
        <begin position="1"/>
        <end position="107"/>
    </location>
</feature>
<feature type="region of interest" description="RGG-box" evidence="1">
    <location>
        <begin position="45"/>
        <end position="54"/>
    </location>
</feature>
<feature type="compositionally biased region" description="Low complexity" evidence="3">
    <location>
        <begin position="1"/>
        <end position="15"/>
    </location>
</feature>
<feature type="compositionally biased region" description="Basic and acidic residues" evidence="3">
    <location>
        <begin position="16"/>
        <end position="36"/>
    </location>
</feature>
<feature type="compositionally biased region" description="Basic and acidic residues" evidence="3">
    <location>
        <begin position="80"/>
        <end position="99"/>
    </location>
</feature>
<feature type="binding site" evidence="2">
    <location>
        <position position="253"/>
    </location>
    <ligand>
        <name>Zn(2+)</name>
        <dbReference type="ChEBI" id="CHEBI:29105"/>
    </ligand>
</feature>
<feature type="binding site" evidence="2">
    <location>
        <position position="328"/>
    </location>
    <ligand>
        <name>Zn(2+)</name>
        <dbReference type="ChEBI" id="CHEBI:29105"/>
    </ligand>
</feature>
<feature type="binding site" evidence="2">
    <location>
        <position position="332"/>
    </location>
    <ligand>
        <name>Zn(2+)</name>
        <dbReference type="ChEBI" id="CHEBI:29105"/>
    </ligand>
</feature>
<feature type="binding site" evidence="2">
    <location>
        <position position="337"/>
    </location>
    <ligand>
        <name>Zn(2+)</name>
        <dbReference type="ChEBI" id="CHEBI:29105"/>
    </ligand>
</feature>
<evidence type="ECO:0000250" key="1"/>
<evidence type="ECO:0000250" key="2">
    <source>
        <dbReference type="UniProtKB" id="P10238"/>
    </source>
</evidence>
<evidence type="ECO:0000256" key="3">
    <source>
        <dbReference type="SAM" id="MobiDB-lite"/>
    </source>
</evidence>
<evidence type="ECO:0000305" key="4"/>
<organismHost>
    <name type="scientific">Sus scrofa</name>
    <name type="common">Pig</name>
    <dbReference type="NCBI Taxonomy" id="9823"/>
</organismHost>
<comment type="function">
    <text evidence="1">Multifunctional regulator of the expression of viral genes that mediates nuclear export of viral intronless mRNAs. This immediate early (EI) protein promotes the nuclear export of viral intronless mRNAs by interacting with mRNAs and host NXF1/TAP (By similarity).</text>
</comment>
<comment type="subunit">
    <text evidence="1">Homodimer. Homodimerization is required for transactivation. Associates in a complex with RNA, and host export factors NXF1/TAP and ALYREF; these interactions allow nuclear export of viral transcripts. Interacts with three host shuttling SR proteins SRSF1, SRSF3 and SRSF7. Interacts with host SRPK1. Interacts with IE62; this interaction enhances IE62 transactivation (By similarity).</text>
</comment>
<comment type="subcellular location">
    <subcellularLocation>
        <location evidence="1">Host cytoplasm</location>
    </subcellularLocation>
    <subcellularLocation>
        <location evidence="1">Host nucleus</location>
    </subcellularLocation>
    <text evidence="1">Shuttles between the nucleus and the cytoplasm.</text>
</comment>
<comment type="domain">
    <text evidence="1">Binds viral intronless RNAs and SR proteins through the Arg-rich region.</text>
</comment>
<comment type="similarity">
    <text evidence="4">Belongs to the HHV-1 ICP27 protein family.</text>
</comment>
<protein>
    <recommendedName>
        <fullName>mRNA export factor ICP27 homolog</fullName>
    </recommendedName>
    <alternativeName>
        <fullName>Protein UL54</fullName>
    </alternativeName>
</protein>
<sequence>MEDSGNSSGSEASRSGSEERRPVRERLGSRPPERRPVRARLGAIRRRRGGRGGRAARQALRQRRRQQQQQQRQQQHQRRRQEADRPDGGPDAPPDRLSESARAAVSATHARVGATRVNELFASARHDLSRPVFNDGFRAAGSSPWAAVLEFGAEQFTPDGRRVTWETLMFHGADLHRLFEVRPHATEAARVLREMVLLNEGLTESLASADETLTWVKLILTKGLTLRTLDPIVATAGAVLQNLRLKLGPFLRCYLRDTPVDELVRRRRLRDVRCIVTYTLVMLARIARVVERGSSCVLPEDLGDSPVPLEEYVPGACLGGIMDALDSHKTGCDAPTCRLTCSYTLVPVYMHGKYFYCNHLF</sequence>
<keyword id="KW-0010">Activator</keyword>
<keyword id="KW-0244">Early protein</keyword>
<keyword id="KW-1035">Host cytoplasm</keyword>
<keyword id="KW-1048">Host nucleus</keyword>
<keyword id="KW-0945">Host-virus interaction</keyword>
<keyword id="KW-0479">Metal-binding</keyword>
<keyword id="KW-0694">RNA-binding</keyword>
<keyword id="KW-0804">Transcription</keyword>
<keyword id="KW-0805">Transcription regulation</keyword>
<keyword id="KW-0862">Zinc</keyword>
<keyword id="KW-0863">Zinc-finger</keyword>
<name>ICP27_SUHVK</name>